<dbReference type="EC" id="2.1.1.190" evidence="2"/>
<dbReference type="EMBL" id="CP000034">
    <property type="protein sequence ID" value="ABB63025.1"/>
    <property type="molecule type" value="Genomic_DNA"/>
</dbReference>
<dbReference type="RefSeq" id="WP_000046834.1">
    <property type="nucleotide sequence ID" value="NC_007606.1"/>
</dbReference>
<dbReference type="RefSeq" id="YP_404516.1">
    <property type="nucleotide sequence ID" value="NC_007606.1"/>
</dbReference>
<dbReference type="SMR" id="Q32CD0"/>
<dbReference type="STRING" id="300267.SDY_3002"/>
<dbReference type="EnsemblBacteria" id="ABB63025">
    <property type="protein sequence ID" value="ABB63025"/>
    <property type="gene ID" value="SDY_3002"/>
</dbReference>
<dbReference type="KEGG" id="sdy:SDY_3002"/>
<dbReference type="PATRIC" id="fig|300267.13.peg.3601"/>
<dbReference type="HOGENOM" id="CLU_014689_8_2_6"/>
<dbReference type="Proteomes" id="UP000002716">
    <property type="component" value="Chromosome"/>
</dbReference>
<dbReference type="GO" id="GO:0051539">
    <property type="term" value="F:4 iron, 4 sulfur cluster binding"/>
    <property type="evidence" value="ECO:0007669"/>
    <property type="project" value="UniProtKB-KW"/>
</dbReference>
<dbReference type="GO" id="GO:0005506">
    <property type="term" value="F:iron ion binding"/>
    <property type="evidence" value="ECO:0007669"/>
    <property type="project" value="UniProtKB-UniRule"/>
</dbReference>
<dbReference type="GO" id="GO:0003723">
    <property type="term" value="F:RNA binding"/>
    <property type="evidence" value="ECO:0007669"/>
    <property type="project" value="InterPro"/>
</dbReference>
<dbReference type="GO" id="GO:0070041">
    <property type="term" value="F:rRNA (uridine-C5-)-methyltransferase activity"/>
    <property type="evidence" value="ECO:0007669"/>
    <property type="project" value="UniProtKB-UniRule"/>
</dbReference>
<dbReference type="GO" id="GO:0070475">
    <property type="term" value="P:rRNA base methylation"/>
    <property type="evidence" value="ECO:0007669"/>
    <property type="project" value="TreeGrafter"/>
</dbReference>
<dbReference type="CDD" id="cd02440">
    <property type="entry name" value="AdoMet_MTases"/>
    <property type="match status" value="1"/>
</dbReference>
<dbReference type="FunFam" id="3.40.50.150:FF:000009">
    <property type="entry name" value="23S rRNA (Uracil(1939)-C(5))-methyltransferase RlmD"/>
    <property type="match status" value="1"/>
</dbReference>
<dbReference type="FunFam" id="2.40.50.1070:FF:000004">
    <property type="entry name" value="23S rRNA (uracil(1939)-C(5))-methyltransferase RlmD"/>
    <property type="match status" value="1"/>
</dbReference>
<dbReference type="FunFam" id="2.40.50.140:FF:000097">
    <property type="entry name" value="23S rRNA (uracil(1939)-C(5))-methyltransferase RlmD"/>
    <property type="match status" value="1"/>
</dbReference>
<dbReference type="Gene3D" id="2.40.50.1070">
    <property type="match status" value="1"/>
</dbReference>
<dbReference type="Gene3D" id="2.40.50.140">
    <property type="entry name" value="Nucleic acid-binding proteins"/>
    <property type="match status" value="1"/>
</dbReference>
<dbReference type="Gene3D" id="3.40.50.150">
    <property type="entry name" value="Vaccinia Virus protein VP39"/>
    <property type="match status" value="1"/>
</dbReference>
<dbReference type="HAMAP" id="MF_01010">
    <property type="entry name" value="23SrRNA_methyltr_RlmD"/>
    <property type="match status" value="1"/>
</dbReference>
<dbReference type="InterPro" id="IPR001566">
    <property type="entry name" value="23S_rRNA_MeTrfase_RlmD"/>
</dbReference>
<dbReference type="InterPro" id="IPR030390">
    <property type="entry name" value="MeTrfase_TrmA_AS"/>
</dbReference>
<dbReference type="InterPro" id="IPR030391">
    <property type="entry name" value="MeTrfase_TrmA_CS"/>
</dbReference>
<dbReference type="InterPro" id="IPR012340">
    <property type="entry name" value="NA-bd_OB-fold"/>
</dbReference>
<dbReference type="InterPro" id="IPR029063">
    <property type="entry name" value="SAM-dependent_MTases_sf"/>
</dbReference>
<dbReference type="InterPro" id="IPR002792">
    <property type="entry name" value="TRAM_dom"/>
</dbReference>
<dbReference type="InterPro" id="IPR010280">
    <property type="entry name" value="U5_MeTrfase_fam"/>
</dbReference>
<dbReference type="NCBIfam" id="NF009639">
    <property type="entry name" value="PRK13168.1"/>
    <property type="match status" value="1"/>
</dbReference>
<dbReference type="NCBIfam" id="TIGR00479">
    <property type="entry name" value="rumA"/>
    <property type="match status" value="1"/>
</dbReference>
<dbReference type="PANTHER" id="PTHR11061:SF49">
    <property type="entry name" value="23S RRNA (URACIL(1939)-C(5))-METHYLTRANSFERASE RLMD"/>
    <property type="match status" value="1"/>
</dbReference>
<dbReference type="PANTHER" id="PTHR11061">
    <property type="entry name" value="RNA M5U METHYLTRANSFERASE"/>
    <property type="match status" value="1"/>
</dbReference>
<dbReference type="Pfam" id="PF01938">
    <property type="entry name" value="TRAM"/>
    <property type="match status" value="1"/>
</dbReference>
<dbReference type="Pfam" id="PF05958">
    <property type="entry name" value="tRNA_U5-meth_tr"/>
    <property type="match status" value="1"/>
</dbReference>
<dbReference type="SUPFAM" id="SSF50249">
    <property type="entry name" value="Nucleic acid-binding proteins"/>
    <property type="match status" value="1"/>
</dbReference>
<dbReference type="SUPFAM" id="SSF53335">
    <property type="entry name" value="S-adenosyl-L-methionine-dependent methyltransferases"/>
    <property type="match status" value="1"/>
</dbReference>
<dbReference type="PROSITE" id="PS51687">
    <property type="entry name" value="SAM_MT_RNA_M5U"/>
    <property type="match status" value="1"/>
</dbReference>
<dbReference type="PROSITE" id="PS50926">
    <property type="entry name" value="TRAM"/>
    <property type="match status" value="1"/>
</dbReference>
<dbReference type="PROSITE" id="PS01230">
    <property type="entry name" value="TRMA_1"/>
    <property type="match status" value="1"/>
</dbReference>
<dbReference type="PROSITE" id="PS01231">
    <property type="entry name" value="TRMA_2"/>
    <property type="match status" value="1"/>
</dbReference>
<comment type="function">
    <text evidence="2">Catalyzes the formation of 5-methyl-uridine at position 1939 (m5U1939) in 23S rRNA.</text>
</comment>
<comment type="catalytic activity">
    <reaction evidence="2">
        <text>uridine(1939) in 23S rRNA + S-adenosyl-L-methionine = 5-methyluridine(1939) in 23S rRNA + S-adenosyl-L-homocysteine + H(+)</text>
        <dbReference type="Rhea" id="RHEA:42908"/>
        <dbReference type="Rhea" id="RHEA-COMP:10278"/>
        <dbReference type="Rhea" id="RHEA-COMP:10279"/>
        <dbReference type="ChEBI" id="CHEBI:15378"/>
        <dbReference type="ChEBI" id="CHEBI:57856"/>
        <dbReference type="ChEBI" id="CHEBI:59789"/>
        <dbReference type="ChEBI" id="CHEBI:65315"/>
        <dbReference type="ChEBI" id="CHEBI:74447"/>
        <dbReference type="EC" id="2.1.1.190"/>
    </reaction>
</comment>
<comment type="similarity">
    <text evidence="2">Belongs to the class I-like SAM-binding methyltransferase superfamily. RNA M5U methyltransferase family. RlmD subfamily.</text>
</comment>
<accession>Q32CD0</accession>
<proteinExistence type="inferred from homology"/>
<feature type="initiator methionine" description="Removed" evidence="1">
    <location>
        <position position="1"/>
    </location>
</feature>
<feature type="chain" id="PRO_0000229884" description="23S rRNA (uracil(1939)-C(5))-methyltransferase RlmD">
    <location>
        <begin position="2"/>
        <end position="433"/>
    </location>
</feature>
<feature type="domain" description="TRAM" evidence="2">
    <location>
        <begin position="10"/>
        <end position="68"/>
    </location>
</feature>
<feature type="active site" description="Nucleophile" evidence="2">
    <location>
        <position position="389"/>
    </location>
</feature>
<feature type="binding site" evidence="2">
    <location>
        <position position="81"/>
    </location>
    <ligand>
        <name>[4Fe-4S] cluster</name>
        <dbReference type="ChEBI" id="CHEBI:49883"/>
    </ligand>
</feature>
<feature type="binding site" evidence="2">
    <location>
        <position position="87"/>
    </location>
    <ligand>
        <name>[4Fe-4S] cluster</name>
        <dbReference type="ChEBI" id="CHEBI:49883"/>
    </ligand>
</feature>
<feature type="binding site" evidence="2">
    <location>
        <position position="90"/>
    </location>
    <ligand>
        <name>[4Fe-4S] cluster</name>
        <dbReference type="ChEBI" id="CHEBI:49883"/>
    </ligand>
</feature>
<feature type="binding site" evidence="2">
    <location>
        <position position="162"/>
    </location>
    <ligand>
        <name>[4Fe-4S] cluster</name>
        <dbReference type="ChEBI" id="CHEBI:49883"/>
    </ligand>
</feature>
<feature type="binding site" evidence="2">
    <location>
        <position position="265"/>
    </location>
    <ligand>
        <name>S-adenosyl-L-methionine</name>
        <dbReference type="ChEBI" id="CHEBI:59789"/>
    </ligand>
</feature>
<feature type="binding site" evidence="2">
    <location>
        <position position="294"/>
    </location>
    <ligand>
        <name>S-adenosyl-L-methionine</name>
        <dbReference type="ChEBI" id="CHEBI:59789"/>
    </ligand>
</feature>
<feature type="binding site" evidence="2">
    <location>
        <position position="299"/>
    </location>
    <ligand>
        <name>S-adenosyl-L-methionine</name>
        <dbReference type="ChEBI" id="CHEBI:59789"/>
    </ligand>
</feature>
<feature type="binding site" evidence="2">
    <location>
        <position position="315"/>
    </location>
    <ligand>
        <name>S-adenosyl-L-methionine</name>
        <dbReference type="ChEBI" id="CHEBI:59789"/>
    </ligand>
</feature>
<feature type="binding site" evidence="2">
    <location>
        <position position="342"/>
    </location>
    <ligand>
        <name>S-adenosyl-L-methionine</name>
        <dbReference type="ChEBI" id="CHEBI:59789"/>
    </ligand>
</feature>
<feature type="binding site" evidence="2">
    <location>
        <position position="363"/>
    </location>
    <ligand>
        <name>S-adenosyl-L-methionine</name>
        <dbReference type="ChEBI" id="CHEBI:59789"/>
    </ligand>
</feature>
<organism>
    <name type="scientific">Shigella dysenteriae serotype 1 (strain Sd197)</name>
    <dbReference type="NCBI Taxonomy" id="300267"/>
    <lineage>
        <taxon>Bacteria</taxon>
        <taxon>Pseudomonadati</taxon>
        <taxon>Pseudomonadota</taxon>
        <taxon>Gammaproteobacteria</taxon>
        <taxon>Enterobacterales</taxon>
        <taxon>Enterobacteriaceae</taxon>
        <taxon>Shigella</taxon>
    </lineage>
</organism>
<keyword id="KW-0004">4Fe-4S</keyword>
<keyword id="KW-0408">Iron</keyword>
<keyword id="KW-0411">Iron-sulfur</keyword>
<keyword id="KW-0479">Metal-binding</keyword>
<keyword id="KW-0489">Methyltransferase</keyword>
<keyword id="KW-1185">Reference proteome</keyword>
<keyword id="KW-0698">rRNA processing</keyword>
<keyword id="KW-0949">S-adenosyl-L-methionine</keyword>
<keyword id="KW-0808">Transferase</keyword>
<sequence length="433" mass="48118">MAQFYSAKRRTTTRQIITVSVNDLDSFGQGVARHNGKTLFIPGLLSQENAEVTVTEDKKQYARAKVVRRLSDSPERETPRCPHFGVCGGCQQQHASVDLQQRSKSAALARLMKHEVSEVIADVPWGYRRRARLSLNYLPKTQQLQMGFRKAGSSDIVDVKQCPILVPQLEALLPKVRACLGSLQAMRHLGHVELVQATSGTLMILRHTAPLSSADREKLERFSHSEGLDLYLAPDSEIFETVSGEMPWYDSNGLRLTFSPRDFIQVNAGVNQKMVARALEWLDVQPEDRVLDLFCGMGNFTLPLATQAASVVGVEGVPALVEKGQQNARLNGLQNVTFYHENLEEDVTKQPWAKNGFDKVLLDPARAGAAGVMQQIIKLEPIRIVYVSCNPATLARDSEALLKAGYTIARLAMLDMFPHTGHLESMVLFSRVK</sequence>
<protein>
    <recommendedName>
        <fullName evidence="2">23S rRNA (uracil(1939)-C(5))-methyltransferase RlmD</fullName>
        <ecNumber evidence="2">2.1.1.190</ecNumber>
    </recommendedName>
    <alternativeName>
        <fullName evidence="2">23S rRNA(m5U1939)-methyltransferase</fullName>
    </alternativeName>
</protein>
<reference key="1">
    <citation type="journal article" date="2005" name="Nucleic Acids Res.">
        <title>Genome dynamics and diversity of Shigella species, the etiologic agents of bacillary dysentery.</title>
        <authorList>
            <person name="Yang F."/>
            <person name="Yang J."/>
            <person name="Zhang X."/>
            <person name="Chen L."/>
            <person name="Jiang Y."/>
            <person name="Yan Y."/>
            <person name="Tang X."/>
            <person name="Wang J."/>
            <person name="Xiong Z."/>
            <person name="Dong J."/>
            <person name="Xue Y."/>
            <person name="Zhu Y."/>
            <person name="Xu X."/>
            <person name="Sun L."/>
            <person name="Chen S."/>
            <person name="Nie H."/>
            <person name="Peng J."/>
            <person name="Xu J."/>
            <person name="Wang Y."/>
            <person name="Yuan Z."/>
            <person name="Wen Y."/>
            <person name="Yao Z."/>
            <person name="Shen Y."/>
            <person name="Qiang B."/>
            <person name="Hou Y."/>
            <person name="Yu J."/>
            <person name="Jin Q."/>
        </authorList>
    </citation>
    <scope>NUCLEOTIDE SEQUENCE [LARGE SCALE GENOMIC DNA]</scope>
    <source>
        <strain>Sd197</strain>
    </source>
</reference>
<evidence type="ECO:0000250" key="1"/>
<evidence type="ECO:0000255" key="2">
    <source>
        <dbReference type="HAMAP-Rule" id="MF_01010"/>
    </source>
</evidence>
<gene>
    <name evidence="2" type="primary">rlmD</name>
    <name type="synonym">rumA</name>
    <name type="ordered locus">SDY_3002</name>
</gene>
<name>RLMD_SHIDS</name>